<dbReference type="EC" id="5.3.1.6" evidence="1"/>
<dbReference type="EMBL" id="CP000968">
    <property type="protein sequence ID" value="ACB06762.1"/>
    <property type="molecule type" value="Genomic_DNA"/>
</dbReference>
<dbReference type="RefSeq" id="WP_012308659.1">
    <property type="nucleotide sequence ID" value="NC_010482.1"/>
</dbReference>
<dbReference type="SMR" id="B1L7D5"/>
<dbReference type="FunCoup" id="B1L7D5">
    <property type="interactions" value="233"/>
</dbReference>
<dbReference type="STRING" id="374847.Kcr_0002"/>
<dbReference type="EnsemblBacteria" id="ACB06762">
    <property type="protein sequence ID" value="ACB06762"/>
    <property type="gene ID" value="Kcr_0002"/>
</dbReference>
<dbReference type="GeneID" id="6093308"/>
<dbReference type="KEGG" id="kcr:Kcr_0002"/>
<dbReference type="eggNOG" id="arCOG01122">
    <property type="taxonomic scope" value="Archaea"/>
</dbReference>
<dbReference type="HOGENOM" id="CLU_056590_1_0_2"/>
<dbReference type="InParanoid" id="B1L7D5"/>
<dbReference type="OrthoDB" id="19013at2157"/>
<dbReference type="PhylomeDB" id="B1L7D5"/>
<dbReference type="UniPathway" id="UPA00115">
    <property type="reaction ID" value="UER00412"/>
</dbReference>
<dbReference type="Proteomes" id="UP000001686">
    <property type="component" value="Chromosome"/>
</dbReference>
<dbReference type="GO" id="GO:0004751">
    <property type="term" value="F:ribose-5-phosphate isomerase activity"/>
    <property type="evidence" value="ECO:0007669"/>
    <property type="project" value="UniProtKB-UniRule"/>
</dbReference>
<dbReference type="GO" id="GO:0009052">
    <property type="term" value="P:pentose-phosphate shunt, non-oxidative branch"/>
    <property type="evidence" value="ECO:0007669"/>
    <property type="project" value="UniProtKB-UniRule"/>
</dbReference>
<dbReference type="CDD" id="cd01398">
    <property type="entry name" value="RPI_A"/>
    <property type="match status" value="1"/>
</dbReference>
<dbReference type="FunFam" id="3.40.50.1360:FF:000001">
    <property type="entry name" value="Ribose-5-phosphate isomerase A"/>
    <property type="match status" value="1"/>
</dbReference>
<dbReference type="Gene3D" id="3.30.70.260">
    <property type="match status" value="1"/>
</dbReference>
<dbReference type="Gene3D" id="3.40.50.1360">
    <property type="match status" value="1"/>
</dbReference>
<dbReference type="HAMAP" id="MF_00170">
    <property type="entry name" value="Rib_5P_isom_A"/>
    <property type="match status" value="1"/>
</dbReference>
<dbReference type="InterPro" id="IPR037171">
    <property type="entry name" value="NagB/RpiA_transferase-like"/>
</dbReference>
<dbReference type="InterPro" id="IPR020672">
    <property type="entry name" value="Ribose5P_isomerase_typA_subgr"/>
</dbReference>
<dbReference type="InterPro" id="IPR004788">
    <property type="entry name" value="Ribose5P_isomerase_type_A"/>
</dbReference>
<dbReference type="NCBIfam" id="NF001924">
    <property type="entry name" value="PRK00702.1"/>
    <property type="match status" value="1"/>
</dbReference>
<dbReference type="NCBIfam" id="TIGR00021">
    <property type="entry name" value="rpiA"/>
    <property type="match status" value="1"/>
</dbReference>
<dbReference type="PANTHER" id="PTHR11934">
    <property type="entry name" value="RIBOSE-5-PHOSPHATE ISOMERASE"/>
    <property type="match status" value="1"/>
</dbReference>
<dbReference type="PANTHER" id="PTHR11934:SF0">
    <property type="entry name" value="RIBOSE-5-PHOSPHATE ISOMERASE"/>
    <property type="match status" value="1"/>
</dbReference>
<dbReference type="Pfam" id="PF06026">
    <property type="entry name" value="Rib_5-P_isom_A"/>
    <property type="match status" value="1"/>
</dbReference>
<dbReference type="SUPFAM" id="SSF75445">
    <property type="entry name" value="D-ribose-5-phosphate isomerase (RpiA), lid domain"/>
    <property type="match status" value="1"/>
</dbReference>
<dbReference type="SUPFAM" id="SSF100950">
    <property type="entry name" value="NagB/RpiA/CoA transferase-like"/>
    <property type="match status" value="1"/>
</dbReference>
<gene>
    <name evidence="1" type="primary">rpiA</name>
    <name type="ordered locus">Kcr_0002</name>
</gene>
<accession>B1L7D5</accession>
<name>RPIA_KORCO</name>
<sequence>MIEFEKRLVAREALKLIGDVKLLGLGSGSTVAIFVEELAKSDKAGKIKVIPSSKQIEEVARNQGLEVIYPDGERPEITVDGADEIDSNLNLLKGGGGALLREKVLAYNSSTYVIIADHTKLVEKLCSKRALPVEVLPYGVSWTLGNLIKRFNCDARIRIKDLSPFITDNGNVIVDINCPPLEDPASMESEVKGVPGVVEVGIFVGLADLVLIARGSEVKVLRQGF</sequence>
<protein>
    <recommendedName>
        <fullName evidence="1">Ribose-5-phosphate isomerase A</fullName>
        <ecNumber evidence="1">5.3.1.6</ecNumber>
    </recommendedName>
    <alternativeName>
        <fullName evidence="1">Phosphoriboisomerase A</fullName>
        <shortName evidence="1">PRI</shortName>
    </alternativeName>
</protein>
<comment type="function">
    <text evidence="1">Catalyzes the reversible conversion of ribose-5-phosphate to ribulose 5-phosphate.</text>
</comment>
<comment type="catalytic activity">
    <reaction evidence="1">
        <text>aldehydo-D-ribose 5-phosphate = D-ribulose 5-phosphate</text>
        <dbReference type="Rhea" id="RHEA:14657"/>
        <dbReference type="ChEBI" id="CHEBI:58121"/>
        <dbReference type="ChEBI" id="CHEBI:58273"/>
        <dbReference type="EC" id="5.3.1.6"/>
    </reaction>
</comment>
<comment type="pathway">
    <text evidence="1">Carbohydrate degradation; pentose phosphate pathway; D-ribose 5-phosphate from D-ribulose 5-phosphate (non-oxidative stage): step 1/1.</text>
</comment>
<comment type="subunit">
    <text evidence="1">Homodimer.</text>
</comment>
<comment type="similarity">
    <text evidence="1">Belongs to the ribose 5-phosphate isomerase family.</text>
</comment>
<reference key="1">
    <citation type="journal article" date="2008" name="Proc. Natl. Acad. Sci. U.S.A.">
        <title>A korarchaeal genome reveals new insights into the evolution of the Archaea.</title>
        <authorList>
            <person name="Elkins J.G."/>
            <person name="Podar M."/>
            <person name="Graham D.E."/>
            <person name="Makarova K.S."/>
            <person name="Wolf Y."/>
            <person name="Randau L."/>
            <person name="Hedlund B.P."/>
            <person name="Brochier-Armanet C."/>
            <person name="Kunin V."/>
            <person name="Anderson I."/>
            <person name="Lapidus A."/>
            <person name="Goltsman E."/>
            <person name="Barry K."/>
            <person name="Koonin E.V."/>
            <person name="Hugenholtz P."/>
            <person name="Kyrpides N."/>
            <person name="Wanner G."/>
            <person name="Richardson P."/>
            <person name="Keller M."/>
            <person name="Stetter K.O."/>
        </authorList>
    </citation>
    <scope>NUCLEOTIDE SEQUENCE [LARGE SCALE GENOMIC DNA]</scope>
    <source>
        <strain>OPF8</strain>
    </source>
</reference>
<feature type="chain" id="PRO_1000097670" description="Ribose-5-phosphate isomerase A">
    <location>
        <begin position="1"/>
        <end position="225"/>
    </location>
</feature>
<feature type="active site" description="Proton acceptor" evidence="1">
    <location>
        <position position="102"/>
    </location>
</feature>
<feature type="binding site" evidence="1">
    <location>
        <begin position="27"/>
        <end position="30"/>
    </location>
    <ligand>
        <name>substrate</name>
    </ligand>
</feature>
<feature type="binding site" evidence="1">
    <location>
        <begin position="80"/>
        <end position="83"/>
    </location>
    <ligand>
        <name>substrate</name>
    </ligand>
</feature>
<feature type="binding site" evidence="1">
    <location>
        <begin position="93"/>
        <end position="96"/>
    </location>
    <ligand>
        <name>substrate</name>
    </ligand>
</feature>
<feature type="binding site" evidence="1">
    <location>
        <position position="120"/>
    </location>
    <ligand>
        <name>substrate</name>
    </ligand>
</feature>
<keyword id="KW-0413">Isomerase</keyword>
<keyword id="KW-1185">Reference proteome</keyword>
<organism>
    <name type="scientific">Korarchaeum cryptofilum (strain OPF8)</name>
    <dbReference type="NCBI Taxonomy" id="374847"/>
    <lineage>
        <taxon>Archaea</taxon>
        <taxon>Thermoproteota</taxon>
        <taxon>Candidatus Korarchaeia</taxon>
        <taxon>Candidatus Korarchaeales</taxon>
        <taxon>Candidatus Korarchaeaceae</taxon>
        <taxon>Candidatus Korarchaeum</taxon>
    </lineage>
</organism>
<proteinExistence type="inferred from homology"/>
<evidence type="ECO:0000255" key="1">
    <source>
        <dbReference type="HAMAP-Rule" id="MF_00170"/>
    </source>
</evidence>